<evidence type="ECO:0000250" key="1">
    <source>
        <dbReference type="UniProtKB" id="P56785"/>
    </source>
</evidence>
<evidence type="ECO:0000255" key="2"/>
<evidence type="ECO:0000256" key="3">
    <source>
        <dbReference type="SAM" id="MobiDB-lite"/>
    </source>
</evidence>
<evidence type="ECO:0000305" key="4"/>
<sequence>MIKVLGLLLGPLSSWVEVSGPIIIFGLYYGFLATLPFGPSKIYSTRSFLLGKPGYGIIAISGSITGQLIGFLSMYYSPIYAALWKPYAITLLVVPYMFFRFFQIMDKPSSSESPHLMNSINNPKALSLFMDGLILQLLNPILLANPVLTRLVNLFLFRYSPNISFMISGLCGWLGGHILLTIFIKWVSFRIDRNSLIDNTLLRRYINRTFSLLILCYCSFYLGRAPLPFLKGKNYEDNNGRSVTMARDDRSVAMARKNRSVAIDPQKLQELIKEEKFFRQQPWPIMCFDHNRVYQPIRYIGNSPFTRLGPVRTEVSQYFFGAYSSDGKKRISFTFLPSVLVLGEKLVGGYRDFLYTSCSSEDPYYRWNHTVKRKRDSLGNEFSDRVKALSHGSPAENVIERRVKFSNSNGDSFTEMYDPFLNGAFRGTINQFESPQMLNDSIISNLSDFIEIFMRDPKEGFPNDPLGYGYHISYLWQELEHESFPLPWEPLPTYTVRSLVPVTISSNPGTPQPKYALNRLKMKKISYLIQTPEIQPPYWLWIAWRSSIIHVPVQVARCYGDIYTNFLVYVYGRFDRLIKPSASGIIRMDAISCLFKKEYLFVYENLCFLFECLAQYEWTILLISRAGIPRDKRYSMEKKDFISLYREILLNEPLQIREIRKHVPRWSSGLMIGEYDDVDPVLLSSNRILSRKVKDTMTFDIGQRRIGVVQNRYSAEADYRRNLIQGSIRAKRRKIMIWKRIQPNVHSLFFLKRKEIPAYPKDYYDTSDSGRVDKEQIGEEVREKIQRVEDPLSQQTIAESLCLTWPELHYFRGLLLMAQSNIRKNIILPSLIIAKNMGRILLFQVPEFYKDWEEMRREMHVICASDGTELSETTFPDKWETQGMQIKLLFPFRLKPWHRSKPQSAKRLRWSYLTTFGLETDIPFGDPTSNLGIFSKFLKPIFKKVKRRLMGSTGIRRVPRVGYIDKSELNDRIQNKLLSETTPMGSANDSSEVNDQFGYETQTINVKDQDDWTTTMKERIESIAIINSSPITGMSLVDSEIHTGSKGSFNILGSTLKKRLVQIRRIPGLFRNKSVQLIRKRFYSIKFFIKRMDRRMDRDLLPSFINFIASNIKFWIQSAWIRSTRNITTIYGRIFIINKDISRINRGKITNYYSINEKIQDFEIRPDRNMFSMSQAYIFHKIWQIRALDIQRILDHEKPQDLKENDWKQWLRCFDRYNLSPQIWSRINPNKCRNIVNKQCTCYEERFVPYEQQEDSIFATVMEPFLGLLRKMNKRYRYDLLSYSYLNSTKDLDILNLTDIPGPPVQPAIPDERDITDREGILKEKFINDIIEEDWKGTDFNIVNGSRSTVDIYDAIRSCDYDHTTSIDRQKKKTDLITNQQGIDETRRENVGIMDSPKIEKRISQLDLNFWLFPELSGIKNIYYETKSKFIPGNSLLREERERKKIEEEERKETTNVLEQIIGIRSNVKNKQVEDGQDKNGQVEDQDGQDQDGQVEDQQTDGKKKTNKGLFQCKVVDVLGKKRFFYLANICRVMSGMKDPGTYLRIQERNIDLSLMAFCIAIQKNSSANKISKELALQRNVRGKVRNDNEIREDKKIMVFQPYRLSSIVDDQFLMYKIVSISLKLKKRAGEWIDGDFYDGSVQRGKILGDEKNIFSSLNLEDILLPKRRREFRILNRFDLENDHVGFSNGKDIQNDEELMGRDQHLSVDTTQIIKRFLWPSYRLEDIICMNRYWFNTNDGSRSAMLRIRMYPLTVN</sequence>
<dbReference type="EMBL" id="D17510">
    <property type="protein sequence ID" value="BAA04442.1"/>
    <property type="molecule type" value="Genomic_DNA"/>
</dbReference>
<dbReference type="PIR" id="T07566">
    <property type="entry name" value="T07566"/>
</dbReference>
<dbReference type="RefSeq" id="NP_042487.1">
    <property type="nucleotide sequence ID" value="NC_001631.1"/>
</dbReference>
<dbReference type="GO" id="GO:0009706">
    <property type="term" value="C:chloroplast inner membrane"/>
    <property type="evidence" value="ECO:0007669"/>
    <property type="project" value="UniProtKB-SubCell"/>
</dbReference>
<dbReference type="GO" id="GO:0015031">
    <property type="term" value="P:protein transport"/>
    <property type="evidence" value="ECO:0007669"/>
    <property type="project" value="UniProtKB-KW"/>
</dbReference>
<dbReference type="InterPro" id="IPR008896">
    <property type="entry name" value="TIC214"/>
</dbReference>
<dbReference type="PANTHER" id="PTHR33163:SF40">
    <property type="entry name" value="PROTEIN TIC 214"/>
    <property type="match status" value="1"/>
</dbReference>
<dbReference type="PANTHER" id="PTHR33163">
    <property type="entry name" value="PROTEIN TIC 214-RELATED"/>
    <property type="match status" value="1"/>
</dbReference>
<dbReference type="Pfam" id="PF05758">
    <property type="entry name" value="Ycf1"/>
    <property type="match status" value="3"/>
</dbReference>
<accession>P41647</accession>
<gene>
    <name evidence="1" type="primary">TIC214</name>
    <name type="synonym">ycf1</name>
</gene>
<reference key="1">
    <citation type="journal article" date="1994" name="Proc. Natl. Acad. Sci. U.S.A.">
        <title>Loss of all ndh genes as determined by sequencing the entire chloroplast genome of the black pine Pinus thunbergii.</title>
        <authorList>
            <person name="Wakasugi T."/>
            <person name="Tsudzuki J."/>
            <person name="Ito S."/>
            <person name="Nakashima K."/>
            <person name="Tsudzuki T."/>
            <person name="Sugiura M."/>
        </authorList>
    </citation>
    <scope>NUCLEOTIDE SEQUENCE [LARGE SCALE GENOMIC DNA]</scope>
</reference>
<organism>
    <name type="scientific">Pinus thunbergii</name>
    <name type="common">Japanese black pine</name>
    <name type="synonym">Pinus thunbergiana</name>
    <dbReference type="NCBI Taxonomy" id="3350"/>
    <lineage>
        <taxon>Eukaryota</taxon>
        <taxon>Viridiplantae</taxon>
        <taxon>Streptophyta</taxon>
        <taxon>Embryophyta</taxon>
        <taxon>Tracheophyta</taxon>
        <taxon>Spermatophyta</taxon>
        <taxon>Pinopsida</taxon>
        <taxon>Pinidae</taxon>
        <taxon>Conifers I</taxon>
        <taxon>Pinales</taxon>
        <taxon>Pinaceae</taxon>
        <taxon>Pinus</taxon>
        <taxon>Pinus subgen. Pinus</taxon>
    </lineage>
</organism>
<keyword id="KW-0150">Chloroplast</keyword>
<keyword id="KW-0472">Membrane</keyword>
<keyword id="KW-0934">Plastid</keyword>
<keyword id="KW-1001">Plastid inner membrane</keyword>
<keyword id="KW-0653">Protein transport</keyword>
<keyword id="KW-0812">Transmembrane</keyword>
<keyword id="KW-1133">Transmembrane helix</keyword>
<keyword id="KW-0813">Transport</keyword>
<protein>
    <recommendedName>
        <fullName evidence="1">Protein TIC 214</fullName>
    </recommendedName>
    <alternativeName>
        <fullName evidence="1">Translocon at the inner envelope membrane of chloroplasts 214</fullName>
        <shortName evidence="1">AtTIC214</shortName>
    </alternativeName>
</protein>
<proteinExistence type="inferred from homology"/>
<comment type="function">
    <text evidence="1">Involved in protein precursor import into chloroplasts. May be part of an intermediate translocation complex acting as a protein-conducting channel at the inner envelope.</text>
</comment>
<comment type="subunit">
    <text evidence="1">Part of the Tic complex.</text>
</comment>
<comment type="subcellular location">
    <subcellularLocation>
        <location evidence="1">Plastid</location>
        <location evidence="1">Chloroplast inner membrane</location>
        <topology evidence="2">Multi-pass membrane protein</topology>
    </subcellularLocation>
</comment>
<comment type="similarity">
    <text evidence="4">Belongs to the TIC214 family.</text>
</comment>
<feature type="chain" id="PRO_0000217303" description="Protein TIC 214">
    <location>
        <begin position="1"/>
        <end position="1756"/>
    </location>
</feature>
<feature type="transmembrane region" description="Helical" evidence="2">
    <location>
        <begin position="18"/>
        <end position="38"/>
    </location>
</feature>
<feature type="transmembrane region" description="Helical" evidence="2">
    <location>
        <begin position="54"/>
        <end position="74"/>
    </location>
</feature>
<feature type="transmembrane region" description="Helical" evidence="2">
    <location>
        <begin position="79"/>
        <end position="99"/>
    </location>
</feature>
<feature type="transmembrane region" description="Helical" evidence="2">
    <location>
        <begin position="128"/>
        <end position="148"/>
    </location>
</feature>
<feature type="transmembrane region" description="Helical" evidence="2">
    <location>
        <begin position="163"/>
        <end position="183"/>
    </location>
</feature>
<feature type="transmembrane region" description="Helical" evidence="2">
    <location>
        <begin position="210"/>
        <end position="230"/>
    </location>
</feature>
<feature type="region of interest" description="Disordered" evidence="3">
    <location>
        <begin position="1469"/>
        <end position="1504"/>
    </location>
</feature>
<feature type="compositionally biased region" description="Basic and acidic residues" evidence="3">
    <location>
        <begin position="1471"/>
        <end position="1482"/>
    </location>
</feature>
<feature type="compositionally biased region" description="Acidic residues" evidence="3">
    <location>
        <begin position="1484"/>
        <end position="1499"/>
    </location>
</feature>
<geneLocation type="chloroplast"/>
<name>TI214_PINTH</name>